<keyword id="KW-0067">ATP-binding</keyword>
<keyword id="KW-0547">Nucleotide-binding</keyword>
<keyword id="KW-1185">Reference proteome</keyword>
<keyword id="KW-0813">Transport</keyword>
<feature type="chain" id="PRO_0000093177" description="Probable ABC transporter ATP-binding protein AZC_3926">
    <location>
        <begin position="1"/>
        <end position="281"/>
    </location>
</feature>
<feature type="domain" description="ABC transporter" evidence="1">
    <location>
        <begin position="45"/>
        <end position="277"/>
    </location>
</feature>
<feature type="region of interest" description="Disordered" evidence="2">
    <location>
        <begin position="1"/>
        <end position="38"/>
    </location>
</feature>
<feature type="binding site" evidence="1">
    <location>
        <begin position="77"/>
        <end position="84"/>
    </location>
    <ligand>
        <name>ATP</name>
        <dbReference type="ChEBI" id="CHEBI:30616"/>
    </ligand>
</feature>
<evidence type="ECO:0000255" key="1">
    <source>
        <dbReference type="PROSITE-ProRule" id="PRU00434"/>
    </source>
</evidence>
<evidence type="ECO:0000256" key="2">
    <source>
        <dbReference type="SAM" id="MobiDB-lite"/>
    </source>
</evidence>
<evidence type="ECO:0000305" key="3"/>
<reference key="1">
    <citation type="journal article" date="1993" name="Mol. Plant Microbe Interact.">
        <title>Azorhizobium caulinodans nitrogen fixation (nif/fix) gene regulation: mutagenesis of the nifA -24/-12 promoter element, characterization of a ntrA(rpoN) gene, and derivation of a model.</title>
        <authorList>
            <person name="Stigter J."/>
            <person name="Schneider M."/>
            <person name="de Bruijn F.J."/>
        </authorList>
    </citation>
    <scope>NUCLEOTIDE SEQUENCE [GENOMIC DNA]</scope>
</reference>
<reference key="2">
    <citation type="submission" date="2007-04" db="EMBL/GenBank/DDBJ databases">
        <title>Complete genome sequence of the nitrogen-fixing bacterium Azorhizobium caulinodans ORS571.</title>
        <authorList>
            <person name="Lee K.B."/>
            <person name="Backer P.D."/>
            <person name="Aono T."/>
            <person name="Liu C.T."/>
            <person name="Suzuki S."/>
            <person name="Suzuki T."/>
            <person name="Kaneko T."/>
            <person name="Yamada M."/>
            <person name="Tabata S."/>
            <person name="Kupfer D.M."/>
            <person name="Najar F.Z."/>
            <person name="Wiley G.B."/>
            <person name="Roe B."/>
            <person name="Binnewies T."/>
            <person name="Ussery D."/>
            <person name="Vereecke D."/>
            <person name="Gevers D."/>
            <person name="Holsters M."/>
            <person name="Oyaizu H."/>
        </authorList>
    </citation>
    <scope>NUCLEOTIDE SEQUENCE [LARGE SCALE GENOMIC DNA]</scope>
    <source>
        <strain>ATCC 43989 / DSM 5975 / JCM 20966 / LMG 6465 / NBRC 14845 / NCIMB 13405 / ORS 571</strain>
    </source>
</reference>
<protein>
    <recommendedName>
        <fullName>Probable ABC transporter ATP-binding protein AZC_3926</fullName>
    </recommendedName>
    <alternativeName>
        <fullName>ORF1</fullName>
    </alternativeName>
</protein>
<comment type="similarity">
    <text evidence="3">Belongs to the ABC transporter superfamily.</text>
</comment>
<dbReference type="EMBL" id="X69959">
    <property type="protein sequence ID" value="CAA49581.1"/>
    <property type="molecule type" value="Genomic_DNA"/>
</dbReference>
<dbReference type="EMBL" id="AP009384">
    <property type="protein sequence ID" value="BAF89924.1"/>
    <property type="molecule type" value="Genomic_DNA"/>
</dbReference>
<dbReference type="PIR" id="S33579">
    <property type="entry name" value="S33579"/>
</dbReference>
<dbReference type="SMR" id="P33982"/>
<dbReference type="STRING" id="438753.AZC_3926"/>
<dbReference type="KEGG" id="azc:AZC_3926"/>
<dbReference type="eggNOG" id="COG1137">
    <property type="taxonomic scope" value="Bacteria"/>
</dbReference>
<dbReference type="HOGENOM" id="CLU_000604_1_2_5"/>
<dbReference type="Proteomes" id="UP000000270">
    <property type="component" value="Chromosome"/>
</dbReference>
<dbReference type="GO" id="GO:0043190">
    <property type="term" value="C:ATP-binding cassette (ABC) transporter complex"/>
    <property type="evidence" value="ECO:0007669"/>
    <property type="project" value="InterPro"/>
</dbReference>
<dbReference type="GO" id="GO:0005524">
    <property type="term" value="F:ATP binding"/>
    <property type="evidence" value="ECO:0007669"/>
    <property type="project" value="UniProtKB-KW"/>
</dbReference>
<dbReference type="GO" id="GO:0016887">
    <property type="term" value="F:ATP hydrolysis activity"/>
    <property type="evidence" value="ECO:0007669"/>
    <property type="project" value="InterPro"/>
</dbReference>
<dbReference type="GO" id="GO:0055085">
    <property type="term" value="P:transmembrane transport"/>
    <property type="evidence" value="ECO:0007669"/>
    <property type="project" value="InterPro"/>
</dbReference>
<dbReference type="CDD" id="cd03218">
    <property type="entry name" value="ABC_YhbG"/>
    <property type="match status" value="1"/>
</dbReference>
<dbReference type="FunFam" id="3.40.50.300:FF:000151">
    <property type="entry name" value="Lipopolysaccharide ABC transporter ATP-binding protein"/>
    <property type="match status" value="1"/>
</dbReference>
<dbReference type="Gene3D" id="3.40.50.300">
    <property type="entry name" value="P-loop containing nucleotide triphosphate hydrolases"/>
    <property type="match status" value="1"/>
</dbReference>
<dbReference type="InterPro" id="IPR003593">
    <property type="entry name" value="AAA+_ATPase"/>
</dbReference>
<dbReference type="InterPro" id="IPR051120">
    <property type="entry name" value="ABC_AA/LPS_Transport"/>
</dbReference>
<dbReference type="InterPro" id="IPR003439">
    <property type="entry name" value="ABC_transporter-like_ATP-bd"/>
</dbReference>
<dbReference type="InterPro" id="IPR017871">
    <property type="entry name" value="ABC_transporter-like_CS"/>
</dbReference>
<dbReference type="InterPro" id="IPR030921">
    <property type="entry name" value="LPS_export_LptB"/>
</dbReference>
<dbReference type="InterPro" id="IPR027417">
    <property type="entry name" value="P-loop_NTPase"/>
</dbReference>
<dbReference type="NCBIfam" id="TIGR04406">
    <property type="entry name" value="LPS_export_lptB"/>
    <property type="match status" value="1"/>
</dbReference>
<dbReference type="PANTHER" id="PTHR45772">
    <property type="entry name" value="CONSERVED COMPONENT OF ABC TRANSPORTER FOR NATURAL AMINO ACIDS-RELATED"/>
    <property type="match status" value="1"/>
</dbReference>
<dbReference type="PANTHER" id="PTHR45772:SF10">
    <property type="entry name" value="LIPOPOLYSACCHARIDE EXPORT SYSTEM ATP-BINDING PROTEIN LPTB"/>
    <property type="match status" value="1"/>
</dbReference>
<dbReference type="Pfam" id="PF00005">
    <property type="entry name" value="ABC_tran"/>
    <property type="match status" value="1"/>
</dbReference>
<dbReference type="SMART" id="SM00382">
    <property type="entry name" value="AAA"/>
    <property type="match status" value="1"/>
</dbReference>
<dbReference type="SUPFAM" id="SSF52540">
    <property type="entry name" value="P-loop containing nucleoside triphosphate hydrolases"/>
    <property type="match status" value="1"/>
</dbReference>
<dbReference type="PROSITE" id="PS00211">
    <property type="entry name" value="ABC_TRANSPORTER_1"/>
    <property type="match status" value="1"/>
</dbReference>
<dbReference type="PROSITE" id="PS50893">
    <property type="entry name" value="ABC_TRANSPORTER_2"/>
    <property type="match status" value="1"/>
</dbReference>
<proteinExistence type="inferred from homology"/>
<organism>
    <name type="scientific">Azorhizobium caulinodans (strain ATCC 43989 / DSM 5975 / JCM 20966 / LMG 6465 / NBRC 14845 / NCIMB 13405 / ORS 571)</name>
    <dbReference type="NCBI Taxonomy" id="438753"/>
    <lineage>
        <taxon>Bacteria</taxon>
        <taxon>Pseudomonadati</taxon>
        <taxon>Pseudomonadota</taxon>
        <taxon>Alphaproteobacteria</taxon>
        <taxon>Hyphomicrobiales</taxon>
        <taxon>Xanthobacteraceae</taxon>
        <taxon>Azorhizobium</taxon>
    </lineage>
</organism>
<sequence length="281" mass="30620">MNVLSMFGRNATRETSSPAATAGRYADEGDWEGDDHQPATAEGSLAAFGLAKSYGGRKVVRDVSLDVRRGEAVGLLGPNGAGKTTVFYMITGLVKADQGRIELDGHDVTPMPMYRRARLGIGYLPQEASIFRGLSVEDNIGAVLEITEPNRKRRAEELDALLEEFKITHVRKSPSIALSGGERRRVEIARALASRPAFMLLDEPFAGIDPIAVGDIQALVRHLTTRGIGVLITDHNVRETLGLIDRAYIIHSGTVLMEGDPESIVASPDVRRLYLGEEFRL</sequence>
<accession>P33982</accession>
<accession>A8IKL9</accession>
<name>Y3926_AZOC5</name>
<gene>
    <name type="ordered locus">AZC_3926</name>
</gene>